<reference key="1">
    <citation type="journal article" date="2004" name="Genome Res.">
        <title>Genome sequence of Haloarcula marismortui: a halophilic archaeon from the Dead Sea.</title>
        <authorList>
            <person name="Baliga N.S."/>
            <person name="Bonneau R."/>
            <person name="Facciotti M.T."/>
            <person name="Pan M."/>
            <person name="Glusman G."/>
            <person name="Deutsch E.W."/>
            <person name="Shannon P."/>
            <person name="Chiu Y."/>
            <person name="Weng R.S."/>
            <person name="Gan R.R."/>
            <person name="Hung P."/>
            <person name="Date S.V."/>
            <person name="Marcotte E."/>
            <person name="Hood L."/>
            <person name="Ng W.V."/>
        </authorList>
    </citation>
    <scope>NUCLEOTIDE SEQUENCE [LARGE SCALE GENOMIC DNA]</scope>
    <source>
        <strain>ATCC 43049 / DSM 3752 / JCM 8966 / VKM B-1809</strain>
    </source>
</reference>
<organism>
    <name type="scientific">Haloarcula marismortui (strain ATCC 43049 / DSM 3752 / JCM 8966 / VKM B-1809)</name>
    <name type="common">Halobacterium marismortui</name>
    <dbReference type="NCBI Taxonomy" id="272569"/>
    <lineage>
        <taxon>Archaea</taxon>
        <taxon>Methanobacteriati</taxon>
        <taxon>Methanobacteriota</taxon>
        <taxon>Stenosarchaea group</taxon>
        <taxon>Halobacteria</taxon>
        <taxon>Halobacteriales</taxon>
        <taxon>Haloarculaceae</taxon>
        <taxon>Haloarcula</taxon>
    </lineage>
</organism>
<proteinExistence type="inferred from homology"/>
<gene>
    <name evidence="1" type="primary">fau-1</name>
    <name type="ordered locus">rrnAC2113</name>
</gene>
<protein>
    <recommendedName>
        <fullName evidence="1">Probable ribonuclease FAU-1</fullName>
        <ecNumber evidence="1">3.1.26.-</ecNumber>
    </recommendedName>
    <alternativeName>
        <fullName evidence="1">RNA-binding protein FAU-1</fullName>
    </alternativeName>
</protein>
<accession>Q5V0I9</accession>
<keyword id="KW-0255">Endonuclease</keyword>
<keyword id="KW-0378">Hydrolase</keyword>
<keyword id="KW-0540">Nuclease</keyword>
<keyword id="KW-1185">Reference proteome</keyword>
<keyword id="KW-0694">RNA-binding</keyword>
<keyword id="KW-0698">rRNA processing</keyword>
<name>FAU1_HALMA</name>
<evidence type="ECO:0000255" key="1">
    <source>
        <dbReference type="HAMAP-Rule" id="MF_01910"/>
    </source>
</evidence>
<comment type="function">
    <text evidence="1">Probable RNase involved in rRNA stability through maturation and/or degradation of precursor rRNAs. Binds to RNA in loop regions with AU-rich sequences.</text>
</comment>
<comment type="similarity">
    <text evidence="1">Belongs to the FAU-1 family.</text>
</comment>
<dbReference type="EC" id="3.1.26.-" evidence="1"/>
<dbReference type="EMBL" id="AY596297">
    <property type="protein sequence ID" value="AAV46964.1"/>
    <property type="molecule type" value="Genomic_DNA"/>
</dbReference>
<dbReference type="RefSeq" id="WP_011224036.1">
    <property type="nucleotide sequence ID" value="NC_006396.1"/>
</dbReference>
<dbReference type="SMR" id="Q5V0I9"/>
<dbReference type="STRING" id="272569.rrnAC2113"/>
<dbReference type="PaxDb" id="272569-rrnAC2113"/>
<dbReference type="EnsemblBacteria" id="AAV46964">
    <property type="protein sequence ID" value="AAV46964"/>
    <property type="gene ID" value="rrnAC2113"/>
</dbReference>
<dbReference type="GeneID" id="40153027"/>
<dbReference type="KEGG" id="hma:rrnAC2113"/>
<dbReference type="PATRIC" id="fig|272569.17.peg.2761"/>
<dbReference type="eggNOG" id="arCOG04307">
    <property type="taxonomic scope" value="Archaea"/>
</dbReference>
<dbReference type="HOGENOM" id="CLU_044303_0_0_2"/>
<dbReference type="Proteomes" id="UP000001169">
    <property type="component" value="Chromosome I"/>
</dbReference>
<dbReference type="GO" id="GO:0035925">
    <property type="term" value="F:mRNA 3'-UTR AU-rich region binding"/>
    <property type="evidence" value="ECO:0007669"/>
    <property type="project" value="UniProtKB-UniRule"/>
</dbReference>
<dbReference type="GO" id="GO:0016891">
    <property type="term" value="F:RNA endonuclease activity, producing 5'-phosphomonoesters"/>
    <property type="evidence" value="ECO:0007669"/>
    <property type="project" value="UniProtKB-UniRule"/>
</dbReference>
<dbReference type="GO" id="GO:0006364">
    <property type="term" value="P:rRNA processing"/>
    <property type="evidence" value="ECO:0007669"/>
    <property type="project" value="UniProtKB-UniRule"/>
</dbReference>
<dbReference type="CDD" id="cd00164">
    <property type="entry name" value="S1_like"/>
    <property type="match status" value="1"/>
</dbReference>
<dbReference type="Gene3D" id="2.40.380.10">
    <property type="entry name" value="FomD-like"/>
    <property type="match status" value="1"/>
</dbReference>
<dbReference type="HAMAP" id="MF_01910">
    <property type="entry name" value="RNA_binding_AU_1"/>
    <property type="match status" value="1"/>
</dbReference>
<dbReference type="InterPro" id="IPR007295">
    <property type="entry name" value="DUF402"/>
</dbReference>
<dbReference type="InterPro" id="IPR035930">
    <property type="entry name" value="FomD-like_sf"/>
</dbReference>
<dbReference type="InterPro" id="IPR012340">
    <property type="entry name" value="NA-bd_OB-fold"/>
</dbReference>
<dbReference type="InterPro" id="IPR050212">
    <property type="entry name" value="Ntdp-like"/>
</dbReference>
<dbReference type="InterPro" id="IPR016730">
    <property type="entry name" value="RNA-bd_FAU-1"/>
</dbReference>
<dbReference type="InterPro" id="IPR003029">
    <property type="entry name" value="S1_domain"/>
</dbReference>
<dbReference type="PANTHER" id="PTHR39159">
    <property type="match status" value="1"/>
</dbReference>
<dbReference type="PANTHER" id="PTHR39159:SF1">
    <property type="entry name" value="UPF0374 PROTEIN YGAC"/>
    <property type="match status" value="1"/>
</dbReference>
<dbReference type="Pfam" id="PF04167">
    <property type="entry name" value="DUF402"/>
    <property type="match status" value="1"/>
</dbReference>
<dbReference type="Pfam" id="PF00575">
    <property type="entry name" value="S1"/>
    <property type="match status" value="1"/>
</dbReference>
<dbReference type="PIRSF" id="PIRSF018644">
    <property type="entry name" value="RNA-binding_FAU-1"/>
    <property type="match status" value="1"/>
</dbReference>
<dbReference type="SMART" id="SM00316">
    <property type="entry name" value="S1"/>
    <property type="match status" value="1"/>
</dbReference>
<dbReference type="SUPFAM" id="SSF159234">
    <property type="entry name" value="FomD-like"/>
    <property type="match status" value="1"/>
</dbReference>
<dbReference type="SUPFAM" id="SSF50249">
    <property type="entry name" value="Nucleic acid-binding proteins"/>
    <property type="match status" value="1"/>
</dbReference>
<dbReference type="PROSITE" id="PS50126">
    <property type="entry name" value="S1"/>
    <property type="match status" value="1"/>
</dbReference>
<feature type="chain" id="PRO_0000334194" description="Probable ribonuclease FAU-1">
    <location>
        <begin position="1"/>
        <end position="466"/>
    </location>
</feature>
<feature type="domain" description="S1 motif" evidence="1">
    <location>
        <begin position="90"/>
        <end position="152"/>
    </location>
</feature>
<sequence length="466" mass="49462">MTVRVRGIYATALTRLLREAGHEVVQASGPIEDRFDGEFADERAAVTVTTTDDQQGVGVIGDHDAAAAVTDRLTELGRDTLHWSDPTPEGAIYAGTVTDTLGSGAVVDLGDGEGFLPYSSSDERVETGDTLRVQVVEASAPWTDGRPVLDTTVAVRGSLLSLVRGETASTPGTGGPAMLDLIAAEPRDGWGVSWESASEDASFDALAAALDAANDRAAAIDASLDGADAPEDCAPTRYDEGRSTVWLWFGRESRFALDEVRREVTSTMPGHHRVKAGDRAASAAVDYVEALCDDPETGETDFPFAVTTRQFGPQVGGSLSLGHGKPDGRLITLGNGEVQSVDDDGTVTIEREMSPGGTYDALGVPKEAGDIAETKVKEGRWWYPTVYRDSDGEKKGTYVNVCTPVEIFPDTARYVDLHVDVVKHADGAVERVDDDELDAAVERGHISEPLAERARSVAAAVKSALE</sequence>